<name>AMYB_MEDSA</name>
<proteinExistence type="evidence at transcript level"/>
<organism>
    <name type="scientific">Medicago sativa</name>
    <name type="common">Alfalfa</name>
    <dbReference type="NCBI Taxonomy" id="3879"/>
    <lineage>
        <taxon>Eukaryota</taxon>
        <taxon>Viridiplantae</taxon>
        <taxon>Streptophyta</taxon>
        <taxon>Embryophyta</taxon>
        <taxon>Tracheophyta</taxon>
        <taxon>Spermatophyta</taxon>
        <taxon>Magnoliopsida</taxon>
        <taxon>eudicotyledons</taxon>
        <taxon>Gunneridae</taxon>
        <taxon>Pentapetalae</taxon>
        <taxon>rosids</taxon>
        <taxon>fabids</taxon>
        <taxon>Fabales</taxon>
        <taxon>Fabaceae</taxon>
        <taxon>Papilionoideae</taxon>
        <taxon>50 kb inversion clade</taxon>
        <taxon>NPAAA clade</taxon>
        <taxon>Hologalegina</taxon>
        <taxon>IRL clade</taxon>
        <taxon>Trifolieae</taxon>
        <taxon>Medicago</taxon>
    </lineage>
</organism>
<gene>
    <name type="primary">BMY1</name>
    <name type="synonym">BA1</name>
</gene>
<feature type="chain" id="PRO_0000153936" description="Beta-amylase">
    <location>
        <begin position="1"/>
        <end position="496"/>
    </location>
</feature>
<feature type="region of interest" description="Disordered" evidence="3">
    <location>
        <begin position="455"/>
        <end position="496"/>
    </location>
</feature>
<feature type="active site" description="Proton donor" evidence="2">
    <location>
        <position position="187"/>
    </location>
</feature>
<feature type="active site" description="Proton acceptor" evidence="1">
    <location>
        <position position="381"/>
    </location>
</feature>
<feature type="binding site" evidence="1">
    <location>
        <position position="54"/>
    </location>
    <ligand>
        <name>substrate</name>
    </ligand>
</feature>
<feature type="binding site" evidence="1">
    <location>
        <position position="94"/>
    </location>
    <ligand>
        <name>substrate</name>
    </ligand>
</feature>
<feature type="binding site" evidence="1">
    <location>
        <position position="102"/>
    </location>
    <ligand>
        <name>substrate</name>
    </ligand>
</feature>
<feature type="binding site" evidence="1">
    <location>
        <position position="296"/>
    </location>
    <ligand>
        <name>substrate</name>
    </ligand>
</feature>
<feature type="binding site" evidence="1">
    <location>
        <position position="301"/>
    </location>
    <ligand>
        <name>substrate</name>
    </ligand>
</feature>
<feature type="binding site" evidence="1">
    <location>
        <position position="343"/>
    </location>
    <ligand>
        <name>substrate</name>
    </ligand>
</feature>
<feature type="binding site" evidence="1">
    <location>
        <begin position="382"/>
        <end position="383"/>
    </location>
    <ligand>
        <name>substrate</name>
    </ligand>
</feature>
<feature type="binding site" evidence="1">
    <location>
        <position position="421"/>
    </location>
    <ligand>
        <name>substrate</name>
    </ligand>
</feature>
<comment type="catalytic activity">
    <reaction>
        <text>Hydrolysis of (1-&gt;4)-alpha-D-glucosidic linkages in polysaccharides so as to remove successive maltose units from the non-reducing ends of the chains.</text>
        <dbReference type="EC" id="3.2.1.2"/>
    </reaction>
</comment>
<comment type="similarity">
    <text evidence="4">Belongs to the glycosyl hydrolase 14 family.</text>
</comment>
<evidence type="ECO:0000250" key="1">
    <source>
        <dbReference type="UniProtKB" id="P10538"/>
    </source>
</evidence>
<evidence type="ECO:0000255" key="2">
    <source>
        <dbReference type="PROSITE-ProRule" id="PRU10050"/>
    </source>
</evidence>
<evidence type="ECO:0000256" key="3">
    <source>
        <dbReference type="SAM" id="MobiDB-lite"/>
    </source>
</evidence>
<evidence type="ECO:0000305" key="4"/>
<accession>O22585</accession>
<reference key="1">
    <citation type="journal article" date="1998" name="Plant Physiol.">
        <title>Expression of beta-amylase from alfalfa taproots.</title>
        <authorList>
            <person name="Gana J.A."/>
            <person name="Kalengamaliro N.E."/>
            <person name="Cunningham S.M."/>
            <person name="Volenec J.J."/>
        </authorList>
    </citation>
    <scope>NUCLEOTIDE SEQUENCE [MRNA]</scope>
    <source>
        <tissue>Root</tissue>
    </source>
</reference>
<keyword id="KW-0119">Carbohydrate metabolism</keyword>
<keyword id="KW-0326">Glycosidase</keyword>
<keyword id="KW-0378">Hydrolase</keyword>
<keyword id="KW-0624">Polysaccharide degradation</keyword>
<dbReference type="EC" id="3.2.1.2"/>
<dbReference type="EMBL" id="AF026217">
    <property type="protein sequence ID" value="AAD04188.1"/>
    <property type="molecule type" value="mRNA"/>
</dbReference>
<dbReference type="PIR" id="T09300">
    <property type="entry name" value="T09300"/>
</dbReference>
<dbReference type="SMR" id="O22585"/>
<dbReference type="CAZy" id="GH14">
    <property type="family name" value="Glycoside Hydrolase Family 14"/>
</dbReference>
<dbReference type="GO" id="GO:0016161">
    <property type="term" value="F:beta-amylase activity"/>
    <property type="evidence" value="ECO:0007669"/>
    <property type="project" value="UniProtKB-EC"/>
</dbReference>
<dbReference type="GO" id="GO:0000272">
    <property type="term" value="P:polysaccharide catabolic process"/>
    <property type="evidence" value="ECO:0007669"/>
    <property type="project" value="UniProtKB-KW"/>
</dbReference>
<dbReference type="FunFam" id="3.20.20.80:FF:000066">
    <property type="entry name" value="Beta-amylase"/>
    <property type="match status" value="1"/>
</dbReference>
<dbReference type="Gene3D" id="3.20.20.80">
    <property type="entry name" value="Glycosidases"/>
    <property type="match status" value="1"/>
</dbReference>
<dbReference type="InterPro" id="IPR001554">
    <property type="entry name" value="Glyco_hydro_14"/>
</dbReference>
<dbReference type="InterPro" id="IPR018238">
    <property type="entry name" value="Glyco_hydro_14_CS"/>
</dbReference>
<dbReference type="InterPro" id="IPR001371">
    <property type="entry name" value="Glyco_hydro_14B_pln"/>
</dbReference>
<dbReference type="InterPro" id="IPR017853">
    <property type="entry name" value="Glycoside_hydrolase_SF"/>
</dbReference>
<dbReference type="PANTHER" id="PTHR31352">
    <property type="entry name" value="BETA-AMYLASE 1, CHLOROPLASTIC"/>
    <property type="match status" value="1"/>
</dbReference>
<dbReference type="PANTHER" id="PTHR31352:SF40">
    <property type="entry name" value="BETA-AMYLASE 6"/>
    <property type="match status" value="1"/>
</dbReference>
<dbReference type="Pfam" id="PF01373">
    <property type="entry name" value="Glyco_hydro_14"/>
    <property type="match status" value="1"/>
</dbReference>
<dbReference type="PRINTS" id="PR00750">
    <property type="entry name" value="BETAAMYLASE"/>
</dbReference>
<dbReference type="PRINTS" id="PR00842">
    <property type="entry name" value="GLHYDLASE14B"/>
</dbReference>
<dbReference type="SUPFAM" id="SSF51445">
    <property type="entry name" value="(Trans)glycosidases"/>
    <property type="match status" value="1"/>
</dbReference>
<dbReference type="PROSITE" id="PS00506">
    <property type="entry name" value="BETA_AMYLASE_1"/>
    <property type="match status" value="1"/>
</dbReference>
<dbReference type="PROSITE" id="PS00679">
    <property type="entry name" value="BETA_AMYLASE_2"/>
    <property type="match status" value="1"/>
</dbReference>
<sequence length="496" mass="56140">MATSNKNMLLNYVPVYVMLPLGVINVNNVFEDPDGLKEQLVQLRAAGVDGVMIDVWWGIIEQKGPKEYDWSAYKSLFQLVQKCGLKLQAIMSFHQCGGNVGDVVNIPLPKWVLDIGESDPDIFYTNRSGIRNQEYLSIGVDNKPIFHGRTAIEIYSDYMKSFRENMSDLLKSEVIIDIEVGLGPAGELRYPSYPQNQGWQFPGIGEFQCYDKYLRESFKAAAAKAGHSEWELPDDAGTYNDVPESTEFFKTNGTYLTEKGKFFLTWYSNQLLNHGDQILDEANKAFLGCKVKLAIKVSGIHWWYKAPNHAAELTAGYYNLDDRDGYRPIAKIVSRHHAILNFTCLEMRDSEQSSDAHSSPQKLVQQVLSGGWRENIEVAGENALSRYDATAYNQIILNARPQGVNKDGPPKLRMYGVTYLRLSDDLMQQSNFDIFKKFVVKMHADQDYCSDPEKYNHGIPPLKRSGPKIPDDVLNEATKPIPPFPWDSETDMKVDG</sequence>
<protein>
    <recommendedName>
        <fullName>Beta-amylase</fullName>
        <ecNumber>3.2.1.2</ecNumber>
    </recommendedName>
    <alternativeName>
        <fullName>1,4-alpha-D-glucan maltohydrolase</fullName>
    </alternativeName>
</protein>